<evidence type="ECO:0000255" key="1"/>
<evidence type="ECO:0000255" key="2">
    <source>
        <dbReference type="PROSITE-ProRule" id="PRU00434"/>
    </source>
</evidence>
<evidence type="ECO:0000256" key="3">
    <source>
        <dbReference type="SAM" id="MobiDB-lite"/>
    </source>
</evidence>
<evidence type="ECO:0000269" key="4">
    <source>
    </source>
</evidence>
<evidence type="ECO:0000269" key="5">
    <source>
    </source>
</evidence>
<evidence type="ECO:0000269" key="6">
    <source>
    </source>
</evidence>
<evidence type="ECO:0000269" key="7">
    <source>
    </source>
</evidence>
<evidence type="ECO:0000269" key="8">
    <source>
    </source>
</evidence>
<evidence type="ECO:0000269" key="9">
    <source>
    </source>
</evidence>
<evidence type="ECO:0000269" key="10">
    <source>
    </source>
</evidence>
<evidence type="ECO:0000269" key="11">
    <source>
    </source>
</evidence>
<evidence type="ECO:0000269" key="12">
    <source>
    </source>
</evidence>
<evidence type="ECO:0000269" key="13">
    <source>
    </source>
</evidence>
<evidence type="ECO:0000269" key="14">
    <source>
    </source>
</evidence>
<evidence type="ECO:0000303" key="15">
    <source>
    </source>
</evidence>
<evidence type="ECO:0000305" key="16"/>
<evidence type="ECO:0000305" key="17">
    <source>
    </source>
</evidence>
<evidence type="ECO:0000305" key="18">
    <source>
    </source>
</evidence>
<reference key="1">
    <citation type="journal article" date="2017" name="Clin. Infect. Dis.">
        <title>Simultaneous emergence of multidrug-resistant Candida auris on 3 continents confirmed by whole-genome sequencing and epidemiological analyses.</title>
        <authorList>
            <person name="Lockhart S.R."/>
            <person name="Etienne K.A."/>
            <person name="Vallabhaneni S."/>
            <person name="Farooqi J."/>
            <person name="Chowdhary A."/>
            <person name="Govender N.P."/>
            <person name="Colombo A.L."/>
            <person name="Calvo B."/>
            <person name="Cuomo C.A."/>
            <person name="Desjardins C.A."/>
            <person name="Berkow E.L."/>
            <person name="Castanheira M."/>
            <person name="Magobo R.E."/>
            <person name="Jabeen K."/>
            <person name="Asghar R.J."/>
            <person name="Meis J.F."/>
            <person name="Jackson B."/>
            <person name="Chiller T."/>
            <person name="Litvintseva A.P."/>
        </authorList>
    </citation>
    <scope>NUCLEOTIDE SEQUENCE [LARGE SCALE GENOMIC DNA]</scope>
    <source>
        <strain>B8441</strain>
    </source>
</reference>
<reference key="2">
    <citation type="journal article" date="2019" name="Antimicrob. Agents Chemother.">
        <title>Abrogation of triazole resistance upon deletion of CDR1 in a clinical isolate of Candida auris.</title>
        <authorList>
            <person name="Rybak J.M."/>
            <person name="Doorley L.A."/>
            <person name="Nishimoto A.T."/>
            <person name="Barker K.S."/>
            <person name="Palmer G.E."/>
            <person name="Rogers P.D."/>
        </authorList>
    </citation>
    <scope>FUNCTION</scope>
    <scope>DISRUPTION PHENOTYPE</scope>
</reference>
<reference key="3">
    <citation type="journal article" date="2019" name="Front. Microbiol.">
        <title>ABC Transporter Genes Show Upregulated Expression in Drug-Resistant Clinical Isolates of Candida auris: A Genome-Wide Characterization of ATP-Binding Cassette (ABC) Transporter Genes.</title>
        <authorList>
            <person name="Wasi M."/>
            <person name="Khandelwal N.K."/>
            <person name="Moorhouse A.J."/>
            <person name="Nair R."/>
            <person name="Vishwakarma P."/>
            <person name="Bravo Ruiz G."/>
            <person name="Ross Z.K."/>
            <person name="Lorenz A."/>
            <person name="Rudramurthy S.M."/>
            <person name="Chakrabarti A."/>
            <person name="Lynn A.M."/>
            <person name="Mondal A.K."/>
            <person name="Gow N.A.R."/>
            <person name="Prasad R."/>
        </authorList>
    </citation>
    <scope>INDUCTION</scope>
</reference>
<reference key="4">
    <citation type="journal article" date="2019" name="MBio">
        <title>Genetic analysis of Candida auris implicates Hsp90 in morphogenesis and azole tolerance and Cdr1 inazole resistance.</title>
        <authorList>
            <person name="Kim S.H."/>
            <person name="Iyer K.R."/>
            <person name="Pardeshi L."/>
            <person name="Munoz J.F."/>
            <person name="Robbins N."/>
            <person name="Cuomo C.A."/>
            <person name="Wong K.H."/>
            <person name="Cowen L.E."/>
        </authorList>
    </citation>
    <scope>FUNCTION</scope>
    <scope>DISRUPTION PHENOTYPE</scope>
</reference>
<reference key="5">
    <citation type="journal article" date="2020" name="Nat. Commun.">
        <title>An oxindole efflux inhibitor potentiates azoles and impairs virulence in the fungal pathogen Candida auris.</title>
        <authorList>
            <person name="Iyer K.R."/>
            <person name="Camara K."/>
            <person name="Daniel-Ivad M."/>
            <person name="Trilles R."/>
            <person name="Pimentel-Elardo S.M."/>
            <person name="Fossen J.L."/>
            <person name="Marchillo K."/>
            <person name="Liu Z."/>
            <person name="Singh S."/>
            <person name="Munoz J.F."/>
            <person name="Kim S.H."/>
            <person name="Porco J.A. Jr."/>
            <person name="Cuomo C.A."/>
            <person name="Williams N.S."/>
            <person name="Ibrahim A.S."/>
            <person name="Edwards J.E. Jr."/>
            <person name="Andes D.R."/>
            <person name="Nodwell J.R."/>
            <person name="Brown L.E."/>
            <person name="Whitesell L."/>
            <person name="Robbins N."/>
            <person name="Cowen L.E."/>
        </authorList>
    </citation>
    <scope>FUNCTION</scope>
    <scope>TRANSPORTER ACTIVITY</scope>
    <scope>ACTIVITY REGULATION</scope>
</reference>
<reference key="6">
    <citation type="journal article" date="2021" name="J. Appl. Microbiol.">
        <title>Antifungal and anti-biofilm effects of 6-shogaol against Candida auris.</title>
        <authorList>
            <person name="Kim H.R."/>
            <person name="Eom Y.B."/>
        </authorList>
    </citation>
    <scope>INDUCTION</scope>
</reference>
<reference key="7">
    <citation type="journal article" date="2021" name="MSphere">
        <title>Transcriptional profiling of the Candida auris response to exogenous farnesol exposure.</title>
        <authorList>
            <person name="Jakab A."/>
            <person name="Balla N."/>
            <person name="Ragyak A."/>
            <person name="Nagy F."/>
            <person name="Kovacs F."/>
            <person name="Sajtos Z."/>
            <person name="Toth Z."/>
            <person name="Borman A.M."/>
            <person name="Pocsi I."/>
            <person name="Baranyai E."/>
            <person name="Majoros L."/>
            <person name="Kovacs R."/>
        </authorList>
    </citation>
    <scope>INDUCTION</scope>
</reference>
<reference key="8">
    <citation type="journal article" date="2022" name="Antimicrob. Agents Chemother.">
        <title>Candida auris pan-drug-resistant to four classes of antifungal agents.</title>
        <authorList>
            <person name="Jacobs S.E."/>
            <person name="Jacobs J.L."/>
            <person name="Dennis E.K."/>
            <person name="Taimur S."/>
            <person name="Rana M."/>
            <person name="Patel D."/>
            <person name="Gitman M."/>
            <person name="Patel G."/>
            <person name="Schaefer S."/>
            <person name="Iyer K."/>
            <person name="Moon J."/>
            <person name="Adams V."/>
            <person name="Lerner P."/>
            <person name="Walsh T.J."/>
            <person name="Zhu Y."/>
            <person name="Anower M.R."/>
            <person name="Vaidya M.M."/>
            <person name="Chaturvedi S."/>
            <person name="Chaturvedi V."/>
        </authorList>
    </citation>
    <scope>FUNCTION</scope>
    <scope>MUTAGENESIS OF VAL-704</scope>
</reference>
<reference key="9">
    <citation type="journal article" date="2022" name="J. Fungi">
        <title>Farnesol boosts the antifungal effect of fluconazole and modulates resistance in Candida auris through regulation of the CDR1 and ERG11 genes.</title>
        <authorList>
            <person name="Dekkerova J."/>
            <person name="Cernakova L."/>
            <person name="Kendra S."/>
            <person name="Borghi E."/>
            <person name="Ottaviano E."/>
            <person name="Willinger B."/>
            <person name="Bujdakova H."/>
        </authorList>
    </citation>
    <scope>FUNCTION</scope>
    <scope>INDUCTION</scope>
</reference>
<reference key="10">
    <citation type="journal article" date="2023" name="J. Fungi">
        <title>Clorgyline analogs synergize with azoles against drug efflux in Candida auris.</title>
        <authorList>
            <person name="Toepfer S."/>
            <person name="Lackner M."/>
            <person name="Keniya M.V."/>
            <person name="Zenz L.M."/>
            <person name="Friemert M."/>
            <person name="Bracher F."/>
            <person name="Monk B.C."/>
        </authorList>
    </citation>
    <scope>FUNCTION</scope>
    <scope>TRANSPORTER ACTIVITY</scope>
    <scope>ACTIVITY REGULATION</scope>
</reference>
<reference key="11">
    <citation type="journal article" date="2023" name="J. Fungi">
        <title>Functional Expression of Recombinant Candida auris Proteins in Saccharomyces cerevisiae Enables Azole Susceptibility Evaluation and Drug Discovery.</title>
        <authorList>
            <person name="Toepfer S."/>
            <person name="Lackner M."/>
            <person name="Keniya M.V."/>
            <person name="Monk B.C."/>
        </authorList>
    </citation>
    <scope>FUNCTION</scope>
    <scope>TRANSPORTER ACTIVITY</scope>
    <scope>ACTIVITY REGULATION</scope>
</reference>
<reference key="12">
    <citation type="journal article" date="2023" name="MBio">
        <title>Broad susceptibility of Candida auris strains to 8-hydroxyquinolines and mechanisms of resistance.</title>
        <authorList>
            <person name="Lohse M.B."/>
            <person name="Laurie M.T."/>
            <person name="Levan S."/>
            <person name="Ziv N."/>
            <person name="Ennis C.L."/>
            <person name="Nobile C.J."/>
            <person name="DeRisi J."/>
            <person name="Johnson A.D."/>
        </authorList>
    </citation>
    <scope>FUNCTION</scope>
    <scope>DISRUPTION PHENOTYPE</scope>
</reference>
<organism>
    <name type="scientific">Candidozyma auris</name>
    <name type="common">Yeast</name>
    <name type="synonym">Candida auris</name>
    <dbReference type="NCBI Taxonomy" id="498019"/>
    <lineage>
        <taxon>Eukaryota</taxon>
        <taxon>Fungi</taxon>
        <taxon>Dikarya</taxon>
        <taxon>Ascomycota</taxon>
        <taxon>Saccharomycotina</taxon>
        <taxon>Pichiomycetes</taxon>
        <taxon>Metschnikowiaceae</taxon>
        <taxon>Candidozyma</taxon>
    </lineage>
</organism>
<dbReference type="EMBL" id="PEKT02000001">
    <property type="protein sequence ID" value="PIS58716.1"/>
    <property type="molecule type" value="Genomic_DNA"/>
</dbReference>
<dbReference type="SMR" id="A0A2H1A768"/>
<dbReference type="STRING" id="498019.A0A2H1A768"/>
<dbReference type="EnsemblFungi" id="B9J08_000164-t37_1">
    <property type="protein sequence ID" value="B9J08_000164-t37_1-p1"/>
    <property type="gene ID" value="B9J08_000164"/>
</dbReference>
<dbReference type="VEuPathDB" id="FungiDB:B9J08_000164"/>
<dbReference type="VEuPathDB" id="FungiDB:CJI96_0001597"/>
<dbReference type="VEuPathDB" id="FungiDB:CJI97_000167"/>
<dbReference type="VEuPathDB" id="FungiDB:CJJ07_001199"/>
<dbReference type="VEuPathDB" id="FungiDB:CJJ09_002139"/>
<dbReference type="VEuPathDB" id="FungiDB:QG37_02647"/>
<dbReference type="OMA" id="EMNGIYM"/>
<dbReference type="OrthoDB" id="245989at2759"/>
<dbReference type="GO" id="GO:0016020">
    <property type="term" value="C:membrane"/>
    <property type="evidence" value="ECO:0000315"/>
    <property type="project" value="CGD"/>
</dbReference>
<dbReference type="GO" id="GO:0005886">
    <property type="term" value="C:plasma membrane"/>
    <property type="evidence" value="ECO:0000315"/>
    <property type="project" value="CGD"/>
</dbReference>
<dbReference type="GO" id="GO:0140359">
    <property type="term" value="F:ABC-type transporter activity"/>
    <property type="evidence" value="ECO:0007669"/>
    <property type="project" value="InterPro"/>
</dbReference>
<dbReference type="GO" id="GO:0005524">
    <property type="term" value="F:ATP binding"/>
    <property type="evidence" value="ECO:0007669"/>
    <property type="project" value="UniProtKB-KW"/>
</dbReference>
<dbReference type="GO" id="GO:0016887">
    <property type="term" value="F:ATP hydrolysis activity"/>
    <property type="evidence" value="ECO:0000315"/>
    <property type="project" value="CGD"/>
</dbReference>
<dbReference type="GO" id="GO:1990961">
    <property type="term" value="P:xenobiotic detoxification by transmembrane export across the plasma membrane"/>
    <property type="evidence" value="ECO:0000315"/>
    <property type="project" value="CGD"/>
</dbReference>
<dbReference type="CDD" id="cd03233">
    <property type="entry name" value="ABCG_PDR_domain1"/>
    <property type="match status" value="1"/>
</dbReference>
<dbReference type="CDD" id="cd03232">
    <property type="entry name" value="ABCG_PDR_domain2"/>
    <property type="match status" value="1"/>
</dbReference>
<dbReference type="FunFam" id="3.40.50.300:FF:000054">
    <property type="entry name" value="ABC multidrug transporter atrF"/>
    <property type="match status" value="1"/>
</dbReference>
<dbReference type="Gene3D" id="3.40.50.300">
    <property type="entry name" value="P-loop containing nucleotide triphosphate hydrolases"/>
    <property type="match status" value="2"/>
</dbReference>
<dbReference type="InterPro" id="IPR003593">
    <property type="entry name" value="AAA+_ATPase"/>
</dbReference>
<dbReference type="InterPro" id="IPR013525">
    <property type="entry name" value="ABC2_TM"/>
</dbReference>
<dbReference type="InterPro" id="IPR029481">
    <property type="entry name" value="ABC_trans_N"/>
</dbReference>
<dbReference type="InterPro" id="IPR003439">
    <property type="entry name" value="ABC_transporter-like_ATP-bd"/>
</dbReference>
<dbReference type="InterPro" id="IPR017871">
    <property type="entry name" value="ABC_transporter-like_CS"/>
</dbReference>
<dbReference type="InterPro" id="IPR034001">
    <property type="entry name" value="ABCG_PDR_1"/>
</dbReference>
<dbReference type="InterPro" id="IPR034003">
    <property type="entry name" value="ABCG_PDR_2"/>
</dbReference>
<dbReference type="InterPro" id="IPR005285">
    <property type="entry name" value="Drug-R_PDR/CDR"/>
</dbReference>
<dbReference type="InterPro" id="IPR027417">
    <property type="entry name" value="P-loop_NTPase"/>
</dbReference>
<dbReference type="InterPro" id="IPR010929">
    <property type="entry name" value="PDR_CDR_ABC"/>
</dbReference>
<dbReference type="NCBIfam" id="TIGR00956">
    <property type="entry name" value="3a01205"/>
    <property type="match status" value="1"/>
</dbReference>
<dbReference type="PANTHER" id="PTHR19241">
    <property type="entry name" value="ATP-BINDING CASSETTE TRANSPORTER"/>
    <property type="match status" value="1"/>
</dbReference>
<dbReference type="Pfam" id="PF01061">
    <property type="entry name" value="ABC2_membrane"/>
    <property type="match status" value="2"/>
</dbReference>
<dbReference type="Pfam" id="PF00005">
    <property type="entry name" value="ABC_tran"/>
    <property type="match status" value="2"/>
</dbReference>
<dbReference type="Pfam" id="PF14510">
    <property type="entry name" value="ABC_trans_N"/>
    <property type="match status" value="1"/>
</dbReference>
<dbReference type="Pfam" id="PF06422">
    <property type="entry name" value="PDR_CDR"/>
    <property type="match status" value="1"/>
</dbReference>
<dbReference type="SMART" id="SM00382">
    <property type="entry name" value="AAA"/>
    <property type="match status" value="2"/>
</dbReference>
<dbReference type="SUPFAM" id="SSF52540">
    <property type="entry name" value="P-loop containing nucleoside triphosphate hydrolases"/>
    <property type="match status" value="2"/>
</dbReference>
<dbReference type="PROSITE" id="PS00211">
    <property type="entry name" value="ABC_TRANSPORTER_1"/>
    <property type="match status" value="1"/>
</dbReference>
<dbReference type="PROSITE" id="PS50893">
    <property type="entry name" value="ABC_TRANSPORTER_2"/>
    <property type="match status" value="2"/>
</dbReference>
<protein>
    <recommendedName>
        <fullName evidence="15">Pleiotropic ABC efflux transporter of multiple drugs CDR1</fullName>
    </recommendedName>
</protein>
<comment type="function">
    <text evidence="4 5 8 11 12 13 14">Pleiotropic ABC efflux transporter that confers resistance to numerous chemicals including itraconazole, fluconazole, voriconazole and posaconazole.</text>
</comment>
<comment type="catalytic activity">
    <reaction evidence="8 12">
        <text>fluconazole(in) + ATP + H2O = fluconazole(out) + ADP + phosphate + H(+)</text>
        <dbReference type="Rhea" id="RHEA:61916"/>
        <dbReference type="ChEBI" id="CHEBI:15377"/>
        <dbReference type="ChEBI" id="CHEBI:15378"/>
        <dbReference type="ChEBI" id="CHEBI:30616"/>
        <dbReference type="ChEBI" id="CHEBI:43474"/>
        <dbReference type="ChEBI" id="CHEBI:46081"/>
        <dbReference type="ChEBI" id="CHEBI:456216"/>
    </reaction>
    <physiologicalReaction direction="left-to-right" evidence="8 12">
        <dbReference type="Rhea" id="RHEA:61917"/>
    </physiologicalReaction>
</comment>
<comment type="catalytic activity">
    <reaction evidence="18">
        <text>itraconazole(in) + ATP + H2O = itraconazole(out) + ADP + phosphate + H(+)</text>
        <dbReference type="Rhea" id="RHEA:33503"/>
        <dbReference type="ChEBI" id="CHEBI:6076"/>
        <dbReference type="ChEBI" id="CHEBI:15377"/>
        <dbReference type="ChEBI" id="CHEBI:15378"/>
        <dbReference type="ChEBI" id="CHEBI:30616"/>
        <dbReference type="ChEBI" id="CHEBI:43474"/>
        <dbReference type="ChEBI" id="CHEBI:456216"/>
    </reaction>
    <physiologicalReaction direction="left-to-right" evidence="18">
        <dbReference type="Rhea" id="RHEA:33504"/>
    </physiologicalReaction>
</comment>
<comment type="catalytic activity">
    <reaction evidence="12 13">
        <text>voriconazole(in) + ATP + H2O = voriconazole(out) + ADP + phosphate + H(+)</text>
        <dbReference type="Rhea" id="RHEA:61912"/>
        <dbReference type="ChEBI" id="CHEBI:10023"/>
        <dbReference type="ChEBI" id="CHEBI:15377"/>
        <dbReference type="ChEBI" id="CHEBI:15378"/>
        <dbReference type="ChEBI" id="CHEBI:30616"/>
        <dbReference type="ChEBI" id="CHEBI:43474"/>
        <dbReference type="ChEBI" id="CHEBI:456216"/>
    </reaction>
    <physiologicalReaction direction="left-to-right" evidence="12 13">
        <dbReference type="Rhea" id="RHEA:61913"/>
    </physiologicalReaction>
</comment>
<comment type="activity regulation">
    <text evidence="8 12 13">The bis-benzodioxolylindolinone azoffluxin acts as an inhibitor of the transporter activity (PubMed:33353950). Clorgyline analogs M19 and M25 inhibit the transcporter activity by uncoupling CDR1 ATPase activity from the active transport of substrates (PubMed:37367600). Activity is also inhibited by beauvericin and oligomycin (PubMed:36836283).</text>
</comment>
<comment type="subcellular location">
    <subcellularLocation>
        <location evidence="17">Cell membrane</location>
        <topology evidence="1">Multi-pass membrane protein</topology>
    </subcellularLocation>
</comment>
<comment type="induction">
    <text evidence="6 7 9 11">Overexpressed in azole-resistant stains (PubMed:31379756, PubMed:35893151). Fluconazole and farnesol modulate the expression (PubMed:34643421, PubMed:35893151). Expression is down-regulated by 6-shogaol, a dehydrated product of 6-gingerol extracted from ginger (Zingiber officinale) (PubMed:32981148).</text>
</comment>
<comment type="domain">
    <text evidence="16">Contains 2 cytoplasmic nucleotide binding domains (NBDs). The N-terminal NBD has ATPase activity. The 2 NBDs are asymmetric and non-exchangeable and the drug efflux by CDR1 involves complex interactions between the two halves of the protein.</text>
</comment>
<comment type="disruption phenotype">
    <text evidence="4 5 14">Leads to hypersusceptibility to antifungal agents such as fluconazole and posaconazole.</text>
</comment>
<comment type="similarity">
    <text evidence="16">Belongs to the ABC transporter superfamily.</text>
</comment>
<gene>
    <name evidence="15" type="primary">CDR1</name>
    <name type="ORF">B9J08_000164</name>
</gene>
<feature type="chain" id="PRO_0000459406" description="Pleiotropic ABC efflux transporter of multiple drugs CDR1">
    <location>
        <begin position="1"/>
        <end position="1508"/>
    </location>
</feature>
<feature type="topological domain" description="Cytoplasmic" evidence="16">
    <location>
        <begin position="1"/>
        <end position="524"/>
    </location>
</feature>
<feature type="transmembrane region" description="Helical" evidence="1">
    <location>
        <begin position="525"/>
        <end position="545"/>
    </location>
</feature>
<feature type="topological domain" description="Extracellular" evidence="16">
    <location>
        <begin position="546"/>
        <end position="559"/>
    </location>
</feature>
<feature type="transmembrane region" description="Helical" evidence="1">
    <location>
        <begin position="560"/>
        <end position="580"/>
    </location>
</feature>
<feature type="topological domain" description="Cytoplasmic" evidence="16">
    <location>
        <begin position="581"/>
        <end position="608"/>
    </location>
</feature>
<feature type="transmembrane region" description="Helical" evidence="1">
    <location>
        <begin position="609"/>
        <end position="629"/>
    </location>
</feature>
<feature type="topological domain" description="Extracellular" evidence="16">
    <location>
        <begin position="630"/>
        <end position="633"/>
    </location>
</feature>
<feature type="transmembrane region" description="Helical" evidence="1">
    <location>
        <begin position="634"/>
        <end position="654"/>
    </location>
</feature>
<feature type="topological domain" description="Cytoplasmic" evidence="16">
    <location>
        <begin position="655"/>
        <end position="673"/>
    </location>
</feature>
<feature type="transmembrane region" description="Helical" evidence="1">
    <location>
        <begin position="674"/>
        <end position="694"/>
    </location>
</feature>
<feature type="topological domain" description="Extracellular" evidence="16">
    <location>
        <begin position="695"/>
        <end position="775"/>
    </location>
</feature>
<feature type="transmembrane region" description="Helical" evidence="1">
    <location>
        <begin position="776"/>
        <end position="796"/>
    </location>
</feature>
<feature type="topological domain" description="Cytoplasmic" evidence="16">
    <location>
        <begin position="797"/>
        <end position="1203"/>
    </location>
</feature>
<feature type="transmembrane region" description="Helical" evidence="1">
    <location>
        <begin position="1204"/>
        <end position="1224"/>
    </location>
</feature>
<feature type="topological domain" description="Extracellular" evidence="16">
    <location>
        <begin position="1225"/>
        <end position="1239"/>
    </location>
</feature>
<feature type="transmembrane region" description="Helical" evidence="1">
    <location>
        <begin position="1240"/>
        <end position="1260"/>
    </location>
</feature>
<feature type="topological domain" description="Cytoplasmic" evidence="16">
    <location>
        <begin position="1261"/>
        <end position="1288"/>
    </location>
</feature>
<feature type="transmembrane region" description="Helical" evidence="1">
    <location>
        <begin position="1289"/>
        <end position="1309"/>
    </location>
</feature>
<feature type="topological domain" description="Extracellular" evidence="16">
    <location>
        <begin position="1310"/>
        <end position="1326"/>
    </location>
</feature>
<feature type="transmembrane region" description="Helical" evidence="1">
    <location>
        <begin position="1327"/>
        <end position="1347"/>
    </location>
</feature>
<feature type="topological domain" description="Cytoplasmic" evidence="16">
    <location>
        <begin position="1348"/>
        <end position="1362"/>
    </location>
</feature>
<feature type="transmembrane region" description="Helical" evidence="1">
    <location>
        <begin position="1363"/>
        <end position="1383"/>
    </location>
</feature>
<feature type="topological domain" description="Extracellular" evidence="16">
    <location>
        <begin position="1384"/>
        <end position="1475"/>
    </location>
</feature>
<feature type="transmembrane region" description="Helical" evidence="1">
    <location>
        <begin position="1476"/>
        <end position="1496"/>
    </location>
</feature>
<feature type="topological domain" description="Cytoplasmic" evidence="16">
    <location>
        <begin position="1497"/>
        <end position="1508"/>
    </location>
</feature>
<feature type="domain" description="ABC transporter 1" evidence="2">
    <location>
        <begin position="165"/>
        <end position="415"/>
    </location>
</feature>
<feature type="domain" description="ABC transporter 2" evidence="2">
    <location>
        <begin position="867"/>
        <end position="1110"/>
    </location>
</feature>
<feature type="region of interest" description="Disordered" evidence="3">
    <location>
        <begin position="1"/>
        <end position="30"/>
    </location>
</feature>
<feature type="region of interest" description="Disordered" evidence="3">
    <location>
        <begin position="839"/>
        <end position="860"/>
    </location>
</feature>
<feature type="compositionally biased region" description="Basic and acidic residues" evidence="3">
    <location>
        <begin position="845"/>
        <end position="860"/>
    </location>
</feature>
<feature type="binding site" evidence="2">
    <location>
        <begin position="903"/>
        <end position="910"/>
    </location>
    <ligand>
        <name>ATP</name>
        <dbReference type="ChEBI" id="CHEBI:30616"/>
    </ligand>
</feature>
<feature type="mutagenesis site" description="Leads to azole antifungal resiszance." evidence="10">
    <original>V</original>
    <variation>L</variation>
    <location>
        <position position="704"/>
    </location>
</feature>
<accession>A0A2H1A768</accession>
<keyword id="KW-0067">ATP-binding</keyword>
<keyword id="KW-1003">Cell membrane</keyword>
<keyword id="KW-0472">Membrane</keyword>
<keyword id="KW-0547">Nucleotide-binding</keyword>
<keyword id="KW-0677">Repeat</keyword>
<keyword id="KW-0812">Transmembrane</keyword>
<keyword id="KW-1133">Transmembrane helix</keyword>
<keyword id="KW-0813">Transport</keyword>
<name>CDR1_CANAR</name>
<sequence>MSEKPFVDAPPPEDGVAHQVSPHDNGSLSEEANSINEYTGFGAHQEGEIRELARTFTNMSHDSGHDLSKTNTSQDLLKYLSHMSEVPGVEPFDPEQISEQLNPDSPNFNAKFWVKNMRKLFDSNPDYYKPSKLGLAYRNLRAYGVAADSDYQPTVSNGLWKMAVDYWHDMRKIDESRCFDILKTMDGYFKPGEVTVVLGRPGSGCSTLLKTIACNTYGFHIGEESQISYDGMTPDEIHKHHRGDVVYSAETDVHFPHLSVGDTLEFAAKLRTPQNRGEVSRLEHAKHMASVTMATYGLSHTRNTPVGNDFVRGVSGGERKRVSIAEVSLSGANIQCWDNATRGLDAATALEFIRALKTSAAILDATPLIAIYQCSQDAYDLFDNVIVLYEGYQIFFGKASEAKQFFLDMGYECPQRQTTADFLTSLTNPEERVVKPGFENKVPRTAKEFSDYWRNSSNYKVLTAGIDKYLAEVADGSQREAYRASHVAKQSDHTRPSSPYTVSFFMQTRYIIGRNFLRMKGDPSIVIFSIFGQGVMGLILSSVFYNLQPTTGSFYYRGAAMFFAVLFNAFASLLEIMSLFEARPIVEKHKKYALYRPSADALASIISELPVKLCMSTCFNFSFYFMVHFRRDPGRFFFYWLFCGLCTLCMSHMFRSLGAVSTSLAAAMTPATSVLLAMVIFTGFVIPIPSMLGWCRWIQYINPVSYVFESLMVNEFHGRKFECAQFVPSGGPYDQVAAVNRVCSTAGARPGEDFVDGTAYLQTSFEYVNAHKWRNLGIVVAYIVVFLGVYIALTEFNKGAMQKGEIALFLRGSLKKVRKQREQNEAKVNDVENNLPNEKISYSDAMEKDSGESSTSDDKLPNQRQIFHWKDLTYQVKIKAENRVILNHVDGWVKPGQITALMGASGAGKTTLLNCLSERLTTGTVTDGVRMVNGHGLDSSFQRSIGYVQQQDIHLATSTVREALTFSAYLRQPSHVSKKEKDEYVDYVIDLLEMGAYSDALVGVAGEGLNVEQRKRLTIGVELVAKPKLLLFLDEPTSGLDSQTAWSICKLMRKLANHGQAILCTIHQPSAILLQEFDRLLFLQKGGKTVYFGDLGKNCQGLIDYFEKHGAHPCPPDANPAEWMLEVVGAAPGSKAAQDYFEVWRNSEEYQEVQRELAYMENELGKLPVDEDPESRKKYATSLIKQYFIVTWRTFQQYWRSPGYIYSKFFLVITASLFNGFAFFHSGTSQQGLQNQMFSMFMFYMPLQTLIQQMLPYYVMQREIYEVREAPSRTFSWFAFIASQITTEIPFQVVLGTVAFFCWYYPVGLYQNATPTDTVHERGALMWLLVTAFYVYTISLGQMVVAFMEIADNAANMVNLMFIMCLNFCGVLATPEALPGFWIFMYRCNPFTYLIQAMLSTGLANTKIVCSSREILHFQPPSGQTCGQYMQQFISAAGGYLLDESATDQCDFCAMSQTNTFLDSVHAVYSERWRNFGIFIAFIAINMIGTIFFYWLARVPKSSKSKNH</sequence>
<proteinExistence type="evidence at protein level"/>